<dbReference type="EC" id="3.5.1.18" evidence="1"/>
<dbReference type="EMBL" id="CP000948">
    <property type="protein sequence ID" value="ACB03623.1"/>
    <property type="molecule type" value="Genomic_DNA"/>
</dbReference>
<dbReference type="RefSeq" id="WP_001277801.1">
    <property type="nucleotide sequence ID" value="NC_010473.1"/>
</dbReference>
<dbReference type="SMR" id="B1XAE3"/>
<dbReference type="MEROPS" id="M20.010"/>
<dbReference type="KEGG" id="ecd:ECDH10B_2637"/>
<dbReference type="HOGENOM" id="CLU_021802_4_0_6"/>
<dbReference type="UniPathway" id="UPA00034">
    <property type="reaction ID" value="UER00021"/>
</dbReference>
<dbReference type="GO" id="GO:0008777">
    <property type="term" value="F:acetylornithine deacetylase activity"/>
    <property type="evidence" value="ECO:0007669"/>
    <property type="project" value="TreeGrafter"/>
</dbReference>
<dbReference type="GO" id="GO:0050897">
    <property type="term" value="F:cobalt ion binding"/>
    <property type="evidence" value="ECO:0007669"/>
    <property type="project" value="UniProtKB-UniRule"/>
</dbReference>
<dbReference type="GO" id="GO:0009014">
    <property type="term" value="F:succinyl-diaminopimelate desuccinylase activity"/>
    <property type="evidence" value="ECO:0007669"/>
    <property type="project" value="UniProtKB-UniRule"/>
</dbReference>
<dbReference type="GO" id="GO:0008270">
    <property type="term" value="F:zinc ion binding"/>
    <property type="evidence" value="ECO:0007669"/>
    <property type="project" value="UniProtKB-UniRule"/>
</dbReference>
<dbReference type="GO" id="GO:0019877">
    <property type="term" value="P:diaminopimelate biosynthetic process"/>
    <property type="evidence" value="ECO:0007669"/>
    <property type="project" value="UniProtKB-UniRule"/>
</dbReference>
<dbReference type="GO" id="GO:0006526">
    <property type="term" value="P:L-arginine biosynthetic process"/>
    <property type="evidence" value="ECO:0007669"/>
    <property type="project" value="TreeGrafter"/>
</dbReference>
<dbReference type="GO" id="GO:0009089">
    <property type="term" value="P:lysine biosynthetic process via diaminopimelate"/>
    <property type="evidence" value="ECO:0007669"/>
    <property type="project" value="UniProtKB-UniRule"/>
</dbReference>
<dbReference type="CDD" id="cd03891">
    <property type="entry name" value="M20_DapE_proteobac"/>
    <property type="match status" value="1"/>
</dbReference>
<dbReference type="FunFam" id="3.30.70.360:FF:000011">
    <property type="entry name" value="Succinyl-diaminopimelate desuccinylase"/>
    <property type="match status" value="1"/>
</dbReference>
<dbReference type="FunFam" id="3.40.630.10:FF:000005">
    <property type="entry name" value="Succinyl-diaminopimelate desuccinylase"/>
    <property type="match status" value="1"/>
</dbReference>
<dbReference type="FunFam" id="3.40.630.10:FF:000010">
    <property type="entry name" value="Succinyl-diaminopimelate desuccinylase"/>
    <property type="match status" value="1"/>
</dbReference>
<dbReference type="Gene3D" id="3.40.630.10">
    <property type="entry name" value="Zn peptidases"/>
    <property type="match status" value="2"/>
</dbReference>
<dbReference type="HAMAP" id="MF_01690">
    <property type="entry name" value="DapE"/>
    <property type="match status" value="1"/>
</dbReference>
<dbReference type="InterPro" id="IPR001261">
    <property type="entry name" value="ArgE/DapE_CS"/>
</dbReference>
<dbReference type="InterPro" id="IPR036264">
    <property type="entry name" value="Bact_exopeptidase_dim_dom"/>
</dbReference>
<dbReference type="InterPro" id="IPR005941">
    <property type="entry name" value="DapE_proteobac"/>
</dbReference>
<dbReference type="InterPro" id="IPR002933">
    <property type="entry name" value="Peptidase_M20"/>
</dbReference>
<dbReference type="InterPro" id="IPR011650">
    <property type="entry name" value="Peptidase_M20_dimer"/>
</dbReference>
<dbReference type="InterPro" id="IPR050072">
    <property type="entry name" value="Peptidase_M20A"/>
</dbReference>
<dbReference type="NCBIfam" id="TIGR01246">
    <property type="entry name" value="dapE_proteo"/>
    <property type="match status" value="1"/>
</dbReference>
<dbReference type="NCBIfam" id="NF009557">
    <property type="entry name" value="PRK13009.1"/>
    <property type="match status" value="1"/>
</dbReference>
<dbReference type="PANTHER" id="PTHR43808">
    <property type="entry name" value="ACETYLORNITHINE DEACETYLASE"/>
    <property type="match status" value="1"/>
</dbReference>
<dbReference type="PANTHER" id="PTHR43808:SF31">
    <property type="entry name" value="N-ACETYL-L-CITRULLINE DEACETYLASE"/>
    <property type="match status" value="1"/>
</dbReference>
<dbReference type="Pfam" id="PF07687">
    <property type="entry name" value="M20_dimer"/>
    <property type="match status" value="1"/>
</dbReference>
<dbReference type="Pfam" id="PF01546">
    <property type="entry name" value="Peptidase_M20"/>
    <property type="match status" value="1"/>
</dbReference>
<dbReference type="SUPFAM" id="SSF55031">
    <property type="entry name" value="Bacterial exopeptidase dimerisation domain"/>
    <property type="match status" value="1"/>
</dbReference>
<dbReference type="SUPFAM" id="SSF53187">
    <property type="entry name" value="Zn-dependent exopeptidases"/>
    <property type="match status" value="1"/>
</dbReference>
<dbReference type="PROSITE" id="PS00758">
    <property type="entry name" value="ARGE_DAPE_CPG2_1"/>
    <property type="match status" value="1"/>
</dbReference>
<dbReference type="PROSITE" id="PS00759">
    <property type="entry name" value="ARGE_DAPE_CPG2_2"/>
    <property type="match status" value="1"/>
</dbReference>
<feature type="chain" id="PRO_0000375555" description="Succinyl-diaminopimelate desuccinylase">
    <location>
        <begin position="1"/>
        <end position="375"/>
    </location>
</feature>
<feature type="active site" evidence="1">
    <location>
        <position position="68"/>
    </location>
</feature>
<feature type="active site" description="Proton acceptor" evidence="1">
    <location>
        <position position="133"/>
    </location>
</feature>
<feature type="binding site" evidence="1">
    <location>
        <position position="66"/>
    </location>
    <ligand>
        <name>Zn(2+)</name>
        <dbReference type="ChEBI" id="CHEBI:29105"/>
        <label>1</label>
    </ligand>
</feature>
<feature type="binding site" evidence="1">
    <location>
        <position position="99"/>
    </location>
    <ligand>
        <name>Zn(2+)</name>
        <dbReference type="ChEBI" id="CHEBI:29105"/>
        <label>1</label>
    </ligand>
</feature>
<feature type="binding site" evidence="1">
    <location>
        <position position="99"/>
    </location>
    <ligand>
        <name>Zn(2+)</name>
        <dbReference type="ChEBI" id="CHEBI:29105"/>
        <label>2</label>
    </ligand>
</feature>
<feature type="binding site" evidence="1">
    <location>
        <position position="134"/>
    </location>
    <ligand>
        <name>Zn(2+)</name>
        <dbReference type="ChEBI" id="CHEBI:29105"/>
        <label>2</label>
    </ligand>
</feature>
<feature type="binding site" evidence="1">
    <location>
        <position position="162"/>
    </location>
    <ligand>
        <name>Zn(2+)</name>
        <dbReference type="ChEBI" id="CHEBI:29105"/>
        <label>1</label>
    </ligand>
</feature>
<feature type="binding site" evidence="1">
    <location>
        <position position="348"/>
    </location>
    <ligand>
        <name>Zn(2+)</name>
        <dbReference type="ChEBI" id="CHEBI:29105"/>
        <label>2</label>
    </ligand>
</feature>
<keyword id="KW-0028">Amino-acid biosynthesis</keyword>
<keyword id="KW-0170">Cobalt</keyword>
<keyword id="KW-0220">Diaminopimelate biosynthesis</keyword>
<keyword id="KW-0378">Hydrolase</keyword>
<keyword id="KW-0457">Lysine biosynthesis</keyword>
<keyword id="KW-0479">Metal-binding</keyword>
<keyword id="KW-0862">Zinc</keyword>
<gene>
    <name evidence="1" type="primary">dapE</name>
    <name type="ordered locus">ECDH10B_2637</name>
</gene>
<organism>
    <name type="scientific">Escherichia coli (strain K12 / DH10B)</name>
    <dbReference type="NCBI Taxonomy" id="316385"/>
    <lineage>
        <taxon>Bacteria</taxon>
        <taxon>Pseudomonadati</taxon>
        <taxon>Pseudomonadota</taxon>
        <taxon>Gammaproteobacteria</taxon>
        <taxon>Enterobacterales</taxon>
        <taxon>Enterobacteriaceae</taxon>
        <taxon>Escherichia</taxon>
    </lineage>
</organism>
<comment type="function">
    <text evidence="1">Catalyzes the hydrolysis of N-succinyl-L,L-diaminopimelic acid (SDAP), forming succinate and LL-2,6-diaminopimelate (DAP), an intermediate involved in the bacterial biosynthesis of lysine and meso-diaminopimelic acid, an essential component of bacterial cell walls.</text>
</comment>
<comment type="catalytic activity">
    <reaction evidence="1">
        <text>N-succinyl-(2S,6S)-2,6-diaminopimelate + H2O = (2S,6S)-2,6-diaminopimelate + succinate</text>
        <dbReference type="Rhea" id="RHEA:22608"/>
        <dbReference type="ChEBI" id="CHEBI:15377"/>
        <dbReference type="ChEBI" id="CHEBI:30031"/>
        <dbReference type="ChEBI" id="CHEBI:57609"/>
        <dbReference type="ChEBI" id="CHEBI:58087"/>
        <dbReference type="EC" id="3.5.1.18"/>
    </reaction>
</comment>
<comment type="cofactor">
    <cofactor evidence="1">
        <name>Zn(2+)</name>
        <dbReference type="ChEBI" id="CHEBI:29105"/>
    </cofactor>
    <cofactor evidence="1">
        <name>Co(2+)</name>
        <dbReference type="ChEBI" id="CHEBI:48828"/>
    </cofactor>
    <text evidence="1">Binds 2 Zn(2+) or Co(2+) ions per subunit.</text>
</comment>
<comment type="pathway">
    <text evidence="1">Amino-acid biosynthesis; L-lysine biosynthesis via DAP pathway; LL-2,6-diaminopimelate from (S)-tetrahydrodipicolinate (succinylase route): step 3/3.</text>
</comment>
<comment type="subunit">
    <text evidence="1">Homodimer.</text>
</comment>
<comment type="similarity">
    <text evidence="1">Belongs to the peptidase M20A family. DapE subfamily.</text>
</comment>
<protein>
    <recommendedName>
        <fullName evidence="1">Succinyl-diaminopimelate desuccinylase</fullName>
        <shortName evidence="1">SDAP desuccinylase</shortName>
        <ecNumber evidence="1">3.5.1.18</ecNumber>
    </recommendedName>
    <alternativeName>
        <fullName evidence="1">N-succinyl-LL-2,6-diaminoheptanedioate amidohydrolase</fullName>
    </alternativeName>
</protein>
<accession>B1XAE3</accession>
<proteinExistence type="inferred from homology"/>
<evidence type="ECO:0000255" key="1">
    <source>
        <dbReference type="HAMAP-Rule" id="MF_01690"/>
    </source>
</evidence>
<name>DAPE_ECODH</name>
<sequence>MSCPVIELTQQLIRRPSLSPDDAGCQALLIERLQAIGFTVERMDFADTQNFWAWRGQGETLAFAGHTDVVPPGDADRWINPPFEPTIRDGMLFGRGAADMKGSLAAMVVAAERFVAQHPNHTGRLAFLITSDEEASAHNGTVKVVEALMARNERLDYCLVGEPSSIEVVGDVVKNGRRGSLTCNLTIHGVQGHVAYPHLADNPVHRAAPFLNELVAIEWDQGNEFFPATSMQIANIQAGTGSNNVIPGELFVQFNFRFSTELTDEMIKAQVLALLEKHQLRYTVDWWLSGQPFLTARGKLVDAVVNAVEHYNEIKPQLLTTGGTSDGRFIARMGAQVVELGPVNATIHKINECVNAADLQLLARMYQRIMEQLVA</sequence>
<reference key="1">
    <citation type="journal article" date="2008" name="J. Bacteriol.">
        <title>The complete genome sequence of Escherichia coli DH10B: insights into the biology of a laboratory workhorse.</title>
        <authorList>
            <person name="Durfee T."/>
            <person name="Nelson R."/>
            <person name="Baldwin S."/>
            <person name="Plunkett G. III"/>
            <person name="Burland V."/>
            <person name="Mau B."/>
            <person name="Petrosino J.F."/>
            <person name="Qin X."/>
            <person name="Muzny D.M."/>
            <person name="Ayele M."/>
            <person name="Gibbs R.A."/>
            <person name="Csorgo B."/>
            <person name="Posfai G."/>
            <person name="Weinstock G.M."/>
            <person name="Blattner F.R."/>
        </authorList>
    </citation>
    <scope>NUCLEOTIDE SEQUENCE [LARGE SCALE GENOMIC DNA]</scope>
    <source>
        <strain>K12 / DH10B</strain>
    </source>
</reference>